<name>ISPD_GEOUR</name>
<keyword id="KW-0414">Isoprene biosynthesis</keyword>
<keyword id="KW-0548">Nucleotidyltransferase</keyword>
<keyword id="KW-1185">Reference proteome</keyword>
<keyword id="KW-0808">Transferase</keyword>
<reference key="1">
    <citation type="submission" date="2007-05" db="EMBL/GenBank/DDBJ databases">
        <title>Complete sequence of Geobacter uraniireducens Rf4.</title>
        <authorList>
            <consortium name="US DOE Joint Genome Institute"/>
            <person name="Copeland A."/>
            <person name="Lucas S."/>
            <person name="Lapidus A."/>
            <person name="Barry K."/>
            <person name="Detter J.C."/>
            <person name="Glavina del Rio T."/>
            <person name="Hammon N."/>
            <person name="Israni S."/>
            <person name="Dalin E."/>
            <person name="Tice H."/>
            <person name="Pitluck S."/>
            <person name="Chertkov O."/>
            <person name="Brettin T."/>
            <person name="Bruce D."/>
            <person name="Han C."/>
            <person name="Schmutz J."/>
            <person name="Larimer F."/>
            <person name="Land M."/>
            <person name="Hauser L."/>
            <person name="Kyrpides N."/>
            <person name="Mikhailova N."/>
            <person name="Shelobolina E."/>
            <person name="Aklujkar M."/>
            <person name="Lovley D."/>
            <person name="Richardson P."/>
        </authorList>
    </citation>
    <scope>NUCLEOTIDE SEQUENCE [LARGE SCALE GENOMIC DNA]</scope>
    <source>
        <strain>ATCC BAA-1134 / JCM 13001 / Rf4</strain>
    </source>
</reference>
<feature type="chain" id="PRO_1000075934" description="2-C-methyl-D-erythritol 4-phosphate cytidylyltransferase">
    <location>
        <begin position="1"/>
        <end position="233"/>
    </location>
</feature>
<feature type="site" description="Transition state stabilizer" evidence="1">
    <location>
        <position position="15"/>
    </location>
</feature>
<feature type="site" description="Transition state stabilizer" evidence="1">
    <location>
        <position position="22"/>
    </location>
</feature>
<feature type="site" description="Positions MEP for the nucleophilic attack" evidence="1">
    <location>
        <position position="156"/>
    </location>
</feature>
<feature type="site" description="Positions MEP for the nucleophilic attack" evidence="1">
    <location>
        <position position="212"/>
    </location>
</feature>
<accession>A5G938</accession>
<comment type="function">
    <text evidence="1">Catalyzes the formation of 4-diphosphocytidyl-2-C-methyl-D-erythritol from CTP and 2-C-methyl-D-erythritol 4-phosphate (MEP).</text>
</comment>
<comment type="catalytic activity">
    <reaction evidence="1">
        <text>2-C-methyl-D-erythritol 4-phosphate + CTP + H(+) = 4-CDP-2-C-methyl-D-erythritol + diphosphate</text>
        <dbReference type="Rhea" id="RHEA:13429"/>
        <dbReference type="ChEBI" id="CHEBI:15378"/>
        <dbReference type="ChEBI" id="CHEBI:33019"/>
        <dbReference type="ChEBI" id="CHEBI:37563"/>
        <dbReference type="ChEBI" id="CHEBI:57823"/>
        <dbReference type="ChEBI" id="CHEBI:58262"/>
        <dbReference type="EC" id="2.7.7.60"/>
    </reaction>
</comment>
<comment type="pathway">
    <text evidence="1">Isoprenoid biosynthesis; isopentenyl diphosphate biosynthesis via DXP pathway; isopentenyl diphosphate from 1-deoxy-D-xylulose 5-phosphate: step 2/6.</text>
</comment>
<comment type="similarity">
    <text evidence="1">Belongs to the IspD/TarI cytidylyltransferase family. IspD subfamily.</text>
</comment>
<protein>
    <recommendedName>
        <fullName evidence="1">2-C-methyl-D-erythritol 4-phosphate cytidylyltransferase</fullName>
        <ecNumber evidence="1">2.7.7.60</ecNumber>
    </recommendedName>
    <alternativeName>
        <fullName evidence="1">4-diphosphocytidyl-2C-methyl-D-erythritol synthase</fullName>
    </alternativeName>
    <alternativeName>
        <fullName evidence="1">MEP cytidylyltransferase</fullName>
        <shortName evidence="1">MCT</shortName>
    </alternativeName>
</protein>
<evidence type="ECO:0000255" key="1">
    <source>
        <dbReference type="HAMAP-Rule" id="MF_00108"/>
    </source>
</evidence>
<proteinExistence type="inferred from homology"/>
<dbReference type="EC" id="2.7.7.60" evidence="1"/>
<dbReference type="EMBL" id="CP000698">
    <property type="protein sequence ID" value="ABQ28306.1"/>
    <property type="molecule type" value="Genomic_DNA"/>
</dbReference>
<dbReference type="RefSeq" id="WP_011940937.1">
    <property type="nucleotide sequence ID" value="NC_009483.1"/>
</dbReference>
<dbReference type="SMR" id="A5G938"/>
<dbReference type="STRING" id="351605.Gura_4163"/>
<dbReference type="KEGG" id="gur:Gura_4163"/>
<dbReference type="HOGENOM" id="CLU_061281_2_2_7"/>
<dbReference type="OrthoDB" id="9804336at2"/>
<dbReference type="UniPathway" id="UPA00056">
    <property type="reaction ID" value="UER00093"/>
</dbReference>
<dbReference type="Proteomes" id="UP000006695">
    <property type="component" value="Chromosome"/>
</dbReference>
<dbReference type="GO" id="GO:0050518">
    <property type="term" value="F:2-C-methyl-D-erythritol 4-phosphate cytidylyltransferase activity"/>
    <property type="evidence" value="ECO:0007669"/>
    <property type="project" value="UniProtKB-UniRule"/>
</dbReference>
<dbReference type="GO" id="GO:0019288">
    <property type="term" value="P:isopentenyl diphosphate biosynthetic process, methylerythritol 4-phosphate pathway"/>
    <property type="evidence" value="ECO:0007669"/>
    <property type="project" value="UniProtKB-UniRule"/>
</dbReference>
<dbReference type="CDD" id="cd02516">
    <property type="entry name" value="CDP-ME_synthetase"/>
    <property type="match status" value="1"/>
</dbReference>
<dbReference type="FunFam" id="3.90.550.10:FF:000003">
    <property type="entry name" value="2-C-methyl-D-erythritol 4-phosphate cytidylyltransferase"/>
    <property type="match status" value="1"/>
</dbReference>
<dbReference type="Gene3D" id="3.90.550.10">
    <property type="entry name" value="Spore Coat Polysaccharide Biosynthesis Protein SpsA, Chain A"/>
    <property type="match status" value="1"/>
</dbReference>
<dbReference type="HAMAP" id="MF_00108">
    <property type="entry name" value="IspD"/>
    <property type="match status" value="1"/>
</dbReference>
<dbReference type="InterPro" id="IPR001228">
    <property type="entry name" value="IspD"/>
</dbReference>
<dbReference type="InterPro" id="IPR034683">
    <property type="entry name" value="IspD/TarI"/>
</dbReference>
<dbReference type="InterPro" id="IPR050088">
    <property type="entry name" value="IspD/TarI_cytidylyltransf_bact"/>
</dbReference>
<dbReference type="InterPro" id="IPR018294">
    <property type="entry name" value="ISPD_synthase_CS"/>
</dbReference>
<dbReference type="InterPro" id="IPR029044">
    <property type="entry name" value="Nucleotide-diphossugar_trans"/>
</dbReference>
<dbReference type="NCBIfam" id="TIGR00453">
    <property type="entry name" value="ispD"/>
    <property type="match status" value="1"/>
</dbReference>
<dbReference type="PANTHER" id="PTHR32125">
    <property type="entry name" value="2-C-METHYL-D-ERYTHRITOL 4-PHOSPHATE CYTIDYLYLTRANSFERASE, CHLOROPLASTIC"/>
    <property type="match status" value="1"/>
</dbReference>
<dbReference type="PANTHER" id="PTHR32125:SF4">
    <property type="entry name" value="2-C-METHYL-D-ERYTHRITOL 4-PHOSPHATE CYTIDYLYLTRANSFERASE, CHLOROPLASTIC"/>
    <property type="match status" value="1"/>
</dbReference>
<dbReference type="Pfam" id="PF01128">
    <property type="entry name" value="IspD"/>
    <property type="match status" value="1"/>
</dbReference>
<dbReference type="SUPFAM" id="SSF53448">
    <property type="entry name" value="Nucleotide-diphospho-sugar transferases"/>
    <property type="match status" value="1"/>
</dbReference>
<dbReference type="PROSITE" id="PS01295">
    <property type="entry name" value="ISPD"/>
    <property type="match status" value="1"/>
</dbReference>
<organism>
    <name type="scientific">Geotalea uraniireducens (strain Rf4)</name>
    <name type="common">Geobacter uraniireducens</name>
    <dbReference type="NCBI Taxonomy" id="351605"/>
    <lineage>
        <taxon>Bacteria</taxon>
        <taxon>Pseudomonadati</taxon>
        <taxon>Thermodesulfobacteriota</taxon>
        <taxon>Desulfuromonadia</taxon>
        <taxon>Geobacterales</taxon>
        <taxon>Geobacteraceae</taxon>
        <taxon>Geotalea</taxon>
    </lineage>
</organism>
<gene>
    <name evidence="1" type="primary">ispD</name>
    <name type="ordered locus">Gura_4163</name>
</gene>
<sequence length="233" mass="25344">MRVTALVPAAGMGKRMGADINKQYLLLEGKPILAHTLAVFELAPFVDDIYVITPEAEIPYCREHVVEQFGFTKVRGVVAGGKERQNSVLNGLRAIDASDEDDVVLIHDGVRPFIPTAVLKRSVEVATAEDGALVAVPAKDTIKTVEAGIVTGTPPRENIWLAQTPQTFRYGIIRAAHELAAAEGFLGTDDASLVERLGRQVHVVMGDYRNIKITTPEDMLLAEAFLKSVNSER</sequence>